<sequence length="432" mass="49276">MPWDFNNYYSHNMDGLISKLKLSKTESDKLKALRQIVRERTRDVFQEARQVAIDVRRQALTLESVRLKLEKTNVRYLSPEERADLARLIFEMEDEARDDFIKFQPRFWTQGSFQYDTLNRPFHPGQEMDIDDGTYMPMTVFESEPSIGHTLLLLLVDTSLKSLEAENDGWVFEEKNTCGRIKIYREKTHIDVPMYAIPKEQFQKKQTAADSAHLIKSDSVFESFALNRGGREAYAVESDKVNLALREGVRRWSVSDPKIVEDWFNESCKRIGGHLRSVCRFMKAWRDAQWEVGGPSSISLMTAVVNILDRESHNGSDLTGTMKLIARLLPEEFNRGVESPDDTDEKPLFPAESNHNVHHRAIVETMEGLYGILLAAEQSESREEALRKINEAFGKRVTNALLITSSAAAPAFLNAPSKEPSSKPINKTMVSG</sequence>
<evidence type="ECO:0000250" key="1">
    <source>
        <dbReference type="UniProtKB" id="Q9KVG7"/>
    </source>
</evidence>
<evidence type="ECO:0000256" key="2">
    <source>
        <dbReference type="SAM" id="MobiDB-lite"/>
    </source>
</evidence>
<evidence type="ECO:0000269" key="3">
    <source>
    </source>
</evidence>
<evidence type="ECO:0000269" key="4">
    <source>
    </source>
</evidence>
<evidence type="ECO:0000303" key="5">
    <source>
    </source>
</evidence>
<evidence type="ECO:0000303" key="6">
    <source>
    </source>
</evidence>
<evidence type="ECO:0000303" key="7">
    <source>
    </source>
</evidence>
<evidence type="ECO:0000303" key="8">
    <source>
    </source>
</evidence>
<evidence type="ECO:0000305" key="9"/>
<evidence type="ECO:0000305" key="10">
    <source>
    </source>
</evidence>
<evidence type="ECO:0000305" key="11">
    <source>
    </source>
</evidence>
<evidence type="ECO:0000312" key="12">
    <source>
        <dbReference type="EMBL" id="AAP70298.1"/>
    </source>
</evidence>
<evidence type="ECO:0000312" key="13">
    <source>
        <dbReference type="EMBL" id="RRL50146.1"/>
    </source>
</evidence>
<evidence type="ECO:0007744" key="14">
    <source>
        <dbReference type="PDB" id="4XJ6"/>
    </source>
</evidence>
<evidence type="ECO:0007829" key="15">
    <source>
        <dbReference type="PDB" id="4XJ6"/>
    </source>
</evidence>
<proteinExistence type="evidence at protein level"/>
<gene>
    <name evidence="5 7" type="primary">dncV</name>
    <name evidence="13" type="ORF">DU321_04130</name>
</gene>
<reference key="1">
    <citation type="journal article" date="2004" name="Mol. Microbiol.">
        <title>A novel integrative and conjugative element (ICE) of Escherichia coli: the putative progenitor of the Yersinia high-pathogenicity island.</title>
        <authorList>
            <person name="Schubert S."/>
            <person name="Dufke S."/>
            <person name="Sorsa J."/>
            <person name="Heesemann J."/>
        </authorList>
    </citation>
    <scope>NUCLEOTIDE SEQUENCE [GENOMIC DNA]</scope>
    <source>
        <strain>ATCC 35350 / ECOR 31</strain>
    </source>
</reference>
<reference key="2">
    <citation type="submission" date="2018-11" db="EMBL/GenBank/DDBJ databases">
        <title>E. coli isolates of the female bladder.</title>
        <authorList>
            <person name="Garretto A."/>
            <person name="Miller-Ensminger T."/>
            <person name="Wolfe A.J."/>
            <person name="Putonti C."/>
        </authorList>
    </citation>
    <scope>NUCLEOTIDE SEQUENCE [LARGE SCALE GENOMIC DNA]</scope>
    <source>
        <strain>UMB1727</strain>
    </source>
</reference>
<reference key="3">
    <citation type="journal article" date="2019" name="MBio">
        <title>DncV Synthesizes Cyclic GMP-AMP and Regulates Biofilm Formation and Motility in Escherichia coli ECOR31.</title>
        <authorList>
            <person name="Li F."/>
            <person name="Cimdins A."/>
            <person name="Rohde M."/>
            <person name="Jaensch L."/>
            <person name="Kaever V."/>
            <person name="Nimtz M."/>
            <person name="Roemling U."/>
        </authorList>
    </citation>
    <scope>FUNCTION</scope>
    <scope>CATALYTIC ACTIVITY</scope>
    <scope>SUBSTRATE SPECIFICITY</scope>
    <scope>DISRUPTION PHENOTYPE</scope>
    <scope>MUTAGENESIS OF GLN-110 AND 129-ASP--ASP-131</scope>
    <source>
        <strain>ATCC 35350 / ECOR 31</strain>
    </source>
</reference>
<reference key="4">
    <citation type="journal article" date="2019" name="Nature">
        <title>Bacterial cGAS-like enzymes synthesize diverse nucleotide signals.</title>
        <authorList>
            <person name="Whiteley A.T."/>
            <person name="Eaglesham J.B."/>
            <person name="de Oliveira Mann C.C."/>
            <person name="Morehouse B.R."/>
            <person name="Lowey B."/>
            <person name="Nieminen E.A."/>
            <person name="Danilchanka O."/>
            <person name="King D.S."/>
            <person name="Lee A.S.Y."/>
            <person name="Mekalanos J.J."/>
            <person name="Kranzusch P.J."/>
        </authorList>
    </citation>
    <scope>NOMENCLATURE</scope>
    <scope>SIMILARITY</scope>
</reference>
<reference key="5">
    <citation type="journal article" date="2020" name="Nat. Microbiol.">
        <title>Diversity and classification of cyclic-oligonucleotide-based anti-phage signalling systems.</title>
        <authorList>
            <person name="Millman A."/>
            <person name="Melamed S."/>
            <person name="Amitai G."/>
            <person name="Sorek R."/>
        </authorList>
    </citation>
    <scope>CLASSIFICATION AND NOMENCLATURE</scope>
</reference>
<reference evidence="14" key="6">
    <citation type="journal article" date="2015" name="Structure">
        <title>Structural basis for the catalytic mechanism of DncV, bacterial homolog of cyclic GMP-AMP synthase.</title>
        <authorList>
            <person name="Kato K."/>
            <person name="Ishii R."/>
            <person name="Hirano S."/>
            <person name="Ishitani R."/>
            <person name="Nureki O."/>
        </authorList>
    </citation>
    <scope>X-RAY CRYSTALLOGRAPHY (2.31 ANGSTROMS) OF 1-407 IN COMPLEX WITH MAGNESIUM AND 3'-DEOXY-GTP</scope>
    <scope>COFACTOR</scope>
</reference>
<comment type="function">
    <text evidence="4 8 9">Cyclic nucleotide synthase (second messenger synthase) of a CBASS antivirus system (PubMed:30837338). CBASS (cyclic oligonucleotide-based antiphage signaling system) provides immunity against bacteriophage. The CD-NTase protein synthesizes cyclic nucleotides in response to infection; these serve as specific second messenger signals. The signals activate a diverse range of effectors, leading to bacterial cell death and thus abortive phage infection. A type II-C(GA) CBASS system (PubMed:32839535).</text>
</comment>
<comment type="function">
    <text evidence="1 4">Catalyzes the synthesis of 3'3'-cyclic GMP-AMP (3'3'-cGAMP) from GTP and ATP, a second messenger in cell signal transduction. Is also able to produce c-di-AMP and c-di-GMP from ATP and GTP, respectively; however, 3'3'-cGAMP is the dominant molecule produced by DncV in vivo, contrary to the 2'3'-cGAMP produced by eukaryotes. By producing cGAMP, down-regulates csgD expression and expression of flagellum regulon genes, which leads to the down-regulation of rdar biofilm formation and flagellum-mediated swimming and swarming motility in a temperature-dependent manner (PubMed:30837338). Controls the activity of cGAMP-activated phospholipase CapV, a patatin-like lipase that is a direct 3',3'-cGAMP receptor encoded in the dncV operon (By similarity).</text>
</comment>
<comment type="catalytic activity">
    <reaction evidence="4">
        <text>GTP + ATP = 3',3'-cGAMP + 2 diphosphate</text>
        <dbReference type="Rhea" id="RHEA:35647"/>
        <dbReference type="ChEBI" id="CHEBI:30616"/>
        <dbReference type="ChEBI" id="CHEBI:33019"/>
        <dbReference type="ChEBI" id="CHEBI:37565"/>
        <dbReference type="ChEBI" id="CHEBI:71501"/>
    </reaction>
    <physiologicalReaction direction="left-to-right" evidence="4">
        <dbReference type="Rhea" id="RHEA:35648"/>
    </physiologicalReaction>
</comment>
<comment type="cofactor">
    <cofactor evidence="3">
        <name>Mg(2+)</name>
        <dbReference type="ChEBI" id="CHEBI:18420"/>
    </cofactor>
    <text evidence="3">Binds 1 Mg(2+) ion per subunit.</text>
</comment>
<comment type="disruption phenotype">
    <text evidence="4">Deletion of dncV incrementally, but significantly, enhances swimming and swarming motility compared to the ECOR31 wild-type. It also enhances biofilm formation on abiotic surfaces after 48 hours of development.</text>
</comment>
<comment type="miscellaneous">
    <text evidence="10">This is a complex CBASS locus with the loci capE-cdnE-probable diadenylate cyclase-capV-dcnV1-cap2-cap3.</text>
</comment>
<comment type="similarity">
    <text evidence="11">Belongs to the CD-NTase family. A01 subfamily.</text>
</comment>
<organism evidence="12">
    <name type="scientific">Escherichia coli</name>
    <dbReference type="NCBI Taxonomy" id="562"/>
    <lineage>
        <taxon>Bacteria</taxon>
        <taxon>Pseudomonadati</taxon>
        <taxon>Pseudomonadota</taxon>
        <taxon>Gammaproteobacteria</taxon>
        <taxon>Enterobacterales</taxon>
        <taxon>Enterobacteriaceae</taxon>
        <taxon>Escherichia</taxon>
    </lineage>
</organism>
<accession>Q6XGD8</accession>
<dbReference type="EC" id="2.7.7.-" evidence="4"/>
<dbReference type="EMBL" id="AY233333">
    <property type="protein sequence ID" value="AAP70298.1"/>
    <property type="molecule type" value="Genomic_DNA"/>
</dbReference>
<dbReference type="EMBL" id="RRVG01000003">
    <property type="protein sequence ID" value="RRL50146.1"/>
    <property type="molecule type" value="Genomic_DNA"/>
</dbReference>
<dbReference type="RefSeq" id="WP_001593454.1">
    <property type="nucleotide sequence ID" value="NZ_VTMJ01000059.1"/>
</dbReference>
<dbReference type="PDB" id="4XJ6">
    <property type="method" value="X-ray"/>
    <property type="resolution" value="2.31 A"/>
    <property type="chains" value="A=1-407"/>
</dbReference>
<dbReference type="PDBsum" id="4XJ6"/>
<dbReference type="SMR" id="Q6XGD8"/>
<dbReference type="EvolutionaryTrace" id="Q6XGD8"/>
<dbReference type="Proteomes" id="UP000272662">
    <property type="component" value="Unassembled WGS sequence"/>
</dbReference>
<dbReference type="GO" id="GO:0140701">
    <property type="term" value="F:3',3'-cyclic GMP-AMP synthase activity"/>
    <property type="evidence" value="ECO:0000314"/>
    <property type="project" value="UniProtKB"/>
</dbReference>
<dbReference type="GO" id="GO:0005524">
    <property type="term" value="F:ATP binding"/>
    <property type="evidence" value="ECO:0007669"/>
    <property type="project" value="UniProtKB-KW"/>
</dbReference>
<dbReference type="GO" id="GO:0005525">
    <property type="term" value="F:GTP binding"/>
    <property type="evidence" value="ECO:0007669"/>
    <property type="project" value="UniProtKB-KW"/>
</dbReference>
<dbReference type="GO" id="GO:0046872">
    <property type="term" value="F:metal ion binding"/>
    <property type="evidence" value="ECO:0007669"/>
    <property type="project" value="UniProtKB-KW"/>
</dbReference>
<dbReference type="GO" id="GO:0051607">
    <property type="term" value="P:defense response to virus"/>
    <property type="evidence" value="ECO:0007669"/>
    <property type="project" value="UniProtKB-KW"/>
</dbReference>
<dbReference type="GO" id="GO:0009117">
    <property type="term" value="P:nucleotide metabolic process"/>
    <property type="evidence" value="ECO:0007669"/>
    <property type="project" value="UniProtKB-KW"/>
</dbReference>
<dbReference type="InterPro" id="IPR048445">
    <property type="entry name" value="DncV-like_NTFase"/>
</dbReference>
<dbReference type="InterPro" id="IPR048446">
    <property type="entry name" value="DncV_C"/>
</dbReference>
<dbReference type="InterPro" id="IPR047805">
    <property type="entry name" value="GAMP_synthase"/>
</dbReference>
<dbReference type="NCBIfam" id="NF041078">
    <property type="entry name" value="cGAS"/>
    <property type="match status" value="1"/>
</dbReference>
<dbReference type="Pfam" id="PF21654">
    <property type="entry name" value="DncV-like_NTFase"/>
    <property type="match status" value="1"/>
</dbReference>
<dbReference type="Pfam" id="PF21713">
    <property type="entry name" value="DncV_C"/>
    <property type="match status" value="1"/>
</dbReference>
<name>DNCV1_ECOLX</name>
<protein>
    <recommendedName>
        <fullName evidence="7">Cyclic GMP-AMP synthase</fullName>
        <shortName evidence="7">c-GAMP synthase</shortName>
        <shortName>c-GMP-AMP synthase</shortName>
        <ecNumber evidence="4">2.7.7.-</ecNumber>
    </recommendedName>
    <alternativeName>
        <fullName evidence="7">3'3'-cGAMP synthase</fullName>
    </alternativeName>
    <alternativeName>
        <fullName evidence="6">CD-NTase001</fullName>
        <shortName evidence="6">Ec-DncV</shortName>
    </alternativeName>
</protein>
<feature type="chain" id="PRO_0000447705" description="Cyclic GMP-AMP synthase">
    <location>
        <begin position="1"/>
        <end position="432"/>
    </location>
</feature>
<feature type="region of interest" description="Disordered" evidence="2">
    <location>
        <begin position="413"/>
        <end position="432"/>
    </location>
</feature>
<feature type="compositionally biased region" description="Polar residues" evidence="2">
    <location>
        <begin position="423"/>
        <end position="432"/>
    </location>
</feature>
<feature type="binding site" evidence="3">
    <location>
        <begin position="110"/>
        <end position="115"/>
    </location>
    <ligand>
        <name>GTP</name>
        <dbReference type="ChEBI" id="CHEBI:37565"/>
    </ligand>
</feature>
<feature type="binding site" evidence="3 14">
    <location>
        <position position="129"/>
    </location>
    <ligand>
        <name>Mg(2+)</name>
        <dbReference type="ChEBI" id="CHEBI:18420"/>
    </ligand>
</feature>
<feature type="binding site" evidence="3 14">
    <location>
        <position position="131"/>
    </location>
    <ligand>
        <name>Mg(2+)</name>
        <dbReference type="ChEBI" id="CHEBI:18420"/>
    </ligand>
</feature>
<feature type="binding site" evidence="1">
    <location>
        <position position="180"/>
    </location>
    <ligand>
        <name>ATP</name>
        <dbReference type="ChEBI" id="CHEBI:30616"/>
    </ligand>
</feature>
<feature type="binding site" evidence="3 14">
    <location>
        <position position="191"/>
    </location>
    <ligand>
        <name>Mg(2+)</name>
        <dbReference type="ChEBI" id="CHEBI:18420"/>
    </ligand>
</feature>
<feature type="binding site" evidence="1">
    <location>
        <position position="255"/>
    </location>
    <ligand>
        <name>ATP</name>
        <dbReference type="ChEBI" id="CHEBI:30616"/>
    </ligand>
</feature>
<feature type="binding site" evidence="3">
    <location>
        <position position="283"/>
    </location>
    <ligand>
        <name>GTP</name>
        <dbReference type="ChEBI" id="CHEBI:37565"/>
    </ligand>
</feature>
<feature type="binding site" evidence="3">
    <location>
        <position position="297"/>
    </location>
    <ligand>
        <name>GTP</name>
        <dbReference type="ChEBI" id="CHEBI:37565"/>
    </ligand>
</feature>
<feature type="binding site" evidence="3">
    <location>
        <position position="344"/>
    </location>
    <ligand>
        <name>GTP</name>
        <dbReference type="ChEBI" id="CHEBI:37565"/>
    </ligand>
</feature>
<feature type="mutagenesis site" description="Large decrease in catalytic activity." evidence="4">
    <original>Q</original>
    <variation>A</variation>
    <location>
        <position position="110"/>
    </location>
</feature>
<feature type="mutagenesis site" description="Loss of catalytic activity." evidence="4">
    <original>DID</original>
    <variation>AIA</variation>
    <location>
        <begin position="129"/>
        <end position="131"/>
    </location>
</feature>
<feature type="helix" evidence="15">
    <location>
        <begin position="6"/>
        <end position="10"/>
    </location>
</feature>
<feature type="turn" evidence="15">
    <location>
        <begin position="12"/>
        <end position="14"/>
    </location>
</feature>
<feature type="helix" evidence="15">
    <location>
        <begin position="16"/>
        <end position="20"/>
    </location>
</feature>
<feature type="helix" evidence="15">
    <location>
        <begin position="24"/>
        <end position="57"/>
    </location>
</feature>
<feature type="helix" evidence="15">
    <location>
        <begin position="62"/>
        <end position="69"/>
    </location>
</feature>
<feature type="turn" evidence="15">
    <location>
        <begin position="70"/>
        <end position="72"/>
    </location>
</feature>
<feature type="helix" evidence="15">
    <location>
        <begin position="73"/>
        <end position="76"/>
    </location>
</feature>
<feature type="helix" evidence="15">
    <location>
        <begin position="79"/>
        <end position="90"/>
    </location>
</feature>
<feature type="helix" evidence="15">
    <location>
        <begin position="94"/>
        <end position="102"/>
    </location>
</feature>
<feature type="strand" evidence="15">
    <location>
        <begin position="106"/>
        <end position="110"/>
    </location>
</feature>
<feature type="helix" evidence="15">
    <location>
        <begin position="111"/>
        <end position="113"/>
    </location>
</feature>
<feature type="turn" evidence="15">
    <location>
        <begin position="114"/>
        <end position="116"/>
    </location>
</feature>
<feature type="strand" evidence="15">
    <location>
        <begin position="128"/>
        <end position="138"/>
    </location>
</feature>
<feature type="strand" evidence="15">
    <location>
        <begin position="142"/>
        <end position="147"/>
    </location>
</feature>
<feature type="helix" evidence="15">
    <location>
        <begin position="149"/>
        <end position="166"/>
    </location>
</feature>
<feature type="strand" evidence="15">
    <location>
        <begin position="170"/>
        <end position="174"/>
    </location>
</feature>
<feature type="strand" evidence="15">
    <location>
        <begin position="179"/>
        <end position="183"/>
    </location>
</feature>
<feature type="helix" evidence="15">
    <location>
        <begin position="184"/>
        <end position="186"/>
    </location>
</feature>
<feature type="strand" evidence="15">
    <location>
        <begin position="188"/>
        <end position="192"/>
    </location>
</feature>
<feature type="strand" evidence="15">
    <location>
        <begin position="194"/>
        <end position="198"/>
    </location>
</feature>
<feature type="helix" evidence="15">
    <location>
        <begin position="238"/>
        <end position="240"/>
    </location>
</feature>
<feature type="strand" evidence="15">
    <location>
        <begin position="242"/>
        <end position="244"/>
    </location>
</feature>
<feature type="strand" evidence="15">
    <location>
        <begin position="246"/>
        <end position="249"/>
    </location>
</feature>
<feature type="strand" evidence="15">
    <location>
        <begin position="252"/>
        <end position="254"/>
    </location>
</feature>
<feature type="helix" evidence="15">
    <location>
        <begin position="257"/>
        <end position="271"/>
    </location>
</feature>
<feature type="helix" evidence="15">
    <location>
        <begin position="274"/>
        <end position="289"/>
    </location>
</feature>
<feature type="helix" evidence="15">
    <location>
        <begin position="297"/>
        <end position="310"/>
    </location>
</feature>
<feature type="helix" evidence="15">
    <location>
        <begin position="318"/>
        <end position="335"/>
    </location>
</feature>
<feature type="helix" evidence="15">
    <location>
        <begin position="352"/>
        <end position="354"/>
    </location>
</feature>
<feature type="helix" evidence="15">
    <location>
        <begin position="357"/>
        <end position="377"/>
    </location>
</feature>
<feature type="helix" evidence="15">
    <location>
        <begin position="382"/>
        <end position="393"/>
    </location>
</feature>
<feature type="helix" evidence="15">
    <location>
        <begin position="400"/>
        <end position="402"/>
    </location>
</feature>
<keyword id="KW-0002">3D-structure</keyword>
<keyword id="KW-0051">Antiviral defense</keyword>
<keyword id="KW-0067">ATP-binding</keyword>
<keyword id="KW-0342">GTP-binding</keyword>
<keyword id="KW-0460">Magnesium</keyword>
<keyword id="KW-0479">Metal-binding</keyword>
<keyword id="KW-0546">Nucleotide metabolism</keyword>
<keyword id="KW-0547">Nucleotide-binding</keyword>
<keyword id="KW-0548">Nucleotidyltransferase</keyword>
<keyword id="KW-0808">Transferase</keyword>